<accession>Q96CG3</accession>
<organism>
    <name type="scientific">Homo sapiens</name>
    <name type="common">Human</name>
    <dbReference type="NCBI Taxonomy" id="9606"/>
    <lineage>
        <taxon>Eukaryota</taxon>
        <taxon>Metazoa</taxon>
        <taxon>Chordata</taxon>
        <taxon>Craniata</taxon>
        <taxon>Vertebrata</taxon>
        <taxon>Euteleostomi</taxon>
        <taxon>Mammalia</taxon>
        <taxon>Eutheria</taxon>
        <taxon>Euarchontoglires</taxon>
        <taxon>Primates</taxon>
        <taxon>Haplorrhini</taxon>
        <taxon>Catarrhini</taxon>
        <taxon>Hominidae</taxon>
        <taxon>Homo</taxon>
    </lineage>
</organism>
<proteinExistence type="evidence at protein level"/>
<name>TIFA_HUMAN</name>
<reference key="1">
    <citation type="journal article" date="2003" name="J. Biol. Chem.">
        <title>Identification of TIFA as an adapter protein that links tumor necrosis factor receptor-associated factor 6 (TRAF6) to interleukin-1 (IL-1) receptor-associated kinase-1 (IRAK-1) in IL-1 receptor signaling.</title>
        <authorList>
            <person name="Takatsuna H."/>
            <person name="Kato H."/>
            <person name="Gohda J."/>
            <person name="Akiyama T."/>
            <person name="Moriya A."/>
            <person name="Okamoto Y."/>
            <person name="Yamagata Y."/>
            <person name="Otsuka M."/>
            <person name="Umezawa K."/>
            <person name="Semba K."/>
            <person name="Inoue J."/>
        </authorList>
    </citation>
    <scope>NUCLEOTIDE SEQUENCE [MRNA]</scope>
    <scope>FUNCTION</scope>
    <scope>SUBUNIT</scope>
    <scope>INTERACTION WITH TRAF6 AND IRAK1</scope>
    <scope>MUTAGENESIS OF GLY-50; SER-66 AND GLU-178</scope>
    <source>
        <tissue>B-cell</tissue>
    </source>
</reference>
<reference key="2">
    <citation type="journal article" date="2003" name="Oncogene">
        <title>Large-scale identification and characterization of human genes that activate NF-kappaB and MAPK signaling pathways.</title>
        <authorList>
            <person name="Matsuda A."/>
            <person name="Suzuki Y."/>
            <person name="Honda G."/>
            <person name="Muramatsu S."/>
            <person name="Matsuzaki O."/>
            <person name="Nagano Y."/>
            <person name="Doi T."/>
            <person name="Shimotohno K."/>
            <person name="Harada T."/>
            <person name="Nishida E."/>
            <person name="Hayashi H."/>
            <person name="Sugano S."/>
        </authorList>
    </citation>
    <scope>NUCLEOTIDE SEQUENCE [LARGE SCALE MRNA]</scope>
    <source>
        <tissue>Lung</tissue>
    </source>
</reference>
<reference key="3">
    <citation type="journal article" date="2004" name="Nat. Genet.">
        <title>Complete sequencing and characterization of 21,243 full-length human cDNAs.</title>
        <authorList>
            <person name="Ota T."/>
            <person name="Suzuki Y."/>
            <person name="Nishikawa T."/>
            <person name="Otsuki T."/>
            <person name="Sugiyama T."/>
            <person name="Irie R."/>
            <person name="Wakamatsu A."/>
            <person name="Hayashi K."/>
            <person name="Sato H."/>
            <person name="Nagai K."/>
            <person name="Kimura K."/>
            <person name="Makita H."/>
            <person name="Sekine M."/>
            <person name="Obayashi M."/>
            <person name="Nishi T."/>
            <person name="Shibahara T."/>
            <person name="Tanaka T."/>
            <person name="Ishii S."/>
            <person name="Yamamoto J."/>
            <person name="Saito K."/>
            <person name="Kawai Y."/>
            <person name="Isono Y."/>
            <person name="Nakamura Y."/>
            <person name="Nagahari K."/>
            <person name="Murakami K."/>
            <person name="Yasuda T."/>
            <person name="Iwayanagi T."/>
            <person name="Wagatsuma M."/>
            <person name="Shiratori A."/>
            <person name="Sudo H."/>
            <person name="Hosoiri T."/>
            <person name="Kaku Y."/>
            <person name="Kodaira H."/>
            <person name="Kondo H."/>
            <person name="Sugawara M."/>
            <person name="Takahashi M."/>
            <person name="Kanda K."/>
            <person name="Yokoi T."/>
            <person name="Furuya T."/>
            <person name="Kikkawa E."/>
            <person name="Omura Y."/>
            <person name="Abe K."/>
            <person name="Kamihara K."/>
            <person name="Katsuta N."/>
            <person name="Sato K."/>
            <person name="Tanikawa M."/>
            <person name="Yamazaki M."/>
            <person name="Ninomiya K."/>
            <person name="Ishibashi T."/>
            <person name="Yamashita H."/>
            <person name="Murakawa K."/>
            <person name="Fujimori K."/>
            <person name="Tanai H."/>
            <person name="Kimata M."/>
            <person name="Watanabe M."/>
            <person name="Hiraoka S."/>
            <person name="Chiba Y."/>
            <person name="Ishida S."/>
            <person name="Ono Y."/>
            <person name="Takiguchi S."/>
            <person name="Watanabe S."/>
            <person name="Yosida M."/>
            <person name="Hotuta T."/>
            <person name="Kusano J."/>
            <person name="Kanehori K."/>
            <person name="Takahashi-Fujii A."/>
            <person name="Hara H."/>
            <person name="Tanase T.-O."/>
            <person name="Nomura Y."/>
            <person name="Togiya S."/>
            <person name="Komai F."/>
            <person name="Hara R."/>
            <person name="Takeuchi K."/>
            <person name="Arita M."/>
            <person name="Imose N."/>
            <person name="Musashino K."/>
            <person name="Yuuki H."/>
            <person name="Oshima A."/>
            <person name="Sasaki N."/>
            <person name="Aotsuka S."/>
            <person name="Yoshikawa Y."/>
            <person name="Matsunawa H."/>
            <person name="Ichihara T."/>
            <person name="Shiohata N."/>
            <person name="Sano S."/>
            <person name="Moriya S."/>
            <person name="Momiyama H."/>
            <person name="Satoh N."/>
            <person name="Takami S."/>
            <person name="Terashima Y."/>
            <person name="Suzuki O."/>
            <person name="Nakagawa S."/>
            <person name="Senoh A."/>
            <person name="Mizoguchi H."/>
            <person name="Goto Y."/>
            <person name="Shimizu F."/>
            <person name="Wakebe H."/>
            <person name="Hishigaki H."/>
            <person name="Watanabe T."/>
            <person name="Sugiyama A."/>
            <person name="Takemoto M."/>
            <person name="Kawakami B."/>
            <person name="Yamazaki M."/>
            <person name="Watanabe K."/>
            <person name="Kumagai A."/>
            <person name="Itakura S."/>
            <person name="Fukuzumi Y."/>
            <person name="Fujimori Y."/>
            <person name="Komiyama M."/>
            <person name="Tashiro H."/>
            <person name="Tanigami A."/>
            <person name="Fujiwara T."/>
            <person name="Ono T."/>
            <person name="Yamada K."/>
            <person name="Fujii Y."/>
            <person name="Ozaki K."/>
            <person name="Hirao M."/>
            <person name="Ohmori Y."/>
            <person name="Kawabata A."/>
            <person name="Hikiji T."/>
            <person name="Kobatake N."/>
            <person name="Inagaki H."/>
            <person name="Ikema Y."/>
            <person name="Okamoto S."/>
            <person name="Okitani R."/>
            <person name="Kawakami T."/>
            <person name="Noguchi S."/>
            <person name="Itoh T."/>
            <person name="Shigeta K."/>
            <person name="Senba T."/>
            <person name="Matsumura K."/>
            <person name="Nakajima Y."/>
            <person name="Mizuno T."/>
            <person name="Morinaga M."/>
            <person name="Sasaki M."/>
            <person name="Togashi T."/>
            <person name="Oyama M."/>
            <person name="Hata H."/>
            <person name="Watanabe M."/>
            <person name="Komatsu T."/>
            <person name="Mizushima-Sugano J."/>
            <person name="Satoh T."/>
            <person name="Shirai Y."/>
            <person name="Takahashi Y."/>
            <person name="Nakagawa K."/>
            <person name="Okumura K."/>
            <person name="Nagase T."/>
            <person name="Nomura N."/>
            <person name="Kikuchi H."/>
            <person name="Masuho Y."/>
            <person name="Yamashita R."/>
            <person name="Nakai K."/>
            <person name="Yada T."/>
            <person name="Nakamura Y."/>
            <person name="Ohara O."/>
            <person name="Isogai T."/>
            <person name="Sugano S."/>
        </authorList>
    </citation>
    <scope>NUCLEOTIDE SEQUENCE [LARGE SCALE MRNA]</scope>
    <source>
        <tissue>Trachea</tissue>
    </source>
</reference>
<reference key="4">
    <citation type="journal article" date="2005" name="Nature">
        <title>Generation and annotation of the DNA sequences of human chromosomes 2 and 4.</title>
        <authorList>
            <person name="Hillier L.W."/>
            <person name="Graves T.A."/>
            <person name="Fulton R.S."/>
            <person name="Fulton L.A."/>
            <person name="Pepin K.H."/>
            <person name="Minx P."/>
            <person name="Wagner-McPherson C."/>
            <person name="Layman D."/>
            <person name="Wylie K."/>
            <person name="Sekhon M."/>
            <person name="Becker M.C."/>
            <person name="Fewell G.A."/>
            <person name="Delehaunty K.D."/>
            <person name="Miner T.L."/>
            <person name="Nash W.E."/>
            <person name="Kremitzki C."/>
            <person name="Oddy L."/>
            <person name="Du H."/>
            <person name="Sun H."/>
            <person name="Bradshaw-Cordum H."/>
            <person name="Ali J."/>
            <person name="Carter J."/>
            <person name="Cordes M."/>
            <person name="Harris A."/>
            <person name="Isak A."/>
            <person name="van Brunt A."/>
            <person name="Nguyen C."/>
            <person name="Du F."/>
            <person name="Courtney L."/>
            <person name="Kalicki J."/>
            <person name="Ozersky P."/>
            <person name="Abbott S."/>
            <person name="Armstrong J."/>
            <person name="Belter E.A."/>
            <person name="Caruso L."/>
            <person name="Cedroni M."/>
            <person name="Cotton M."/>
            <person name="Davidson T."/>
            <person name="Desai A."/>
            <person name="Elliott G."/>
            <person name="Erb T."/>
            <person name="Fronick C."/>
            <person name="Gaige T."/>
            <person name="Haakenson W."/>
            <person name="Haglund K."/>
            <person name="Holmes A."/>
            <person name="Harkins R."/>
            <person name="Kim K."/>
            <person name="Kruchowski S.S."/>
            <person name="Strong C.M."/>
            <person name="Grewal N."/>
            <person name="Goyea E."/>
            <person name="Hou S."/>
            <person name="Levy A."/>
            <person name="Martinka S."/>
            <person name="Mead K."/>
            <person name="McLellan M.D."/>
            <person name="Meyer R."/>
            <person name="Randall-Maher J."/>
            <person name="Tomlinson C."/>
            <person name="Dauphin-Kohlberg S."/>
            <person name="Kozlowicz-Reilly A."/>
            <person name="Shah N."/>
            <person name="Swearengen-Shahid S."/>
            <person name="Snider J."/>
            <person name="Strong J.T."/>
            <person name="Thompson J."/>
            <person name="Yoakum M."/>
            <person name="Leonard S."/>
            <person name="Pearman C."/>
            <person name="Trani L."/>
            <person name="Radionenko M."/>
            <person name="Waligorski J.E."/>
            <person name="Wang C."/>
            <person name="Rock S.M."/>
            <person name="Tin-Wollam A.-M."/>
            <person name="Maupin R."/>
            <person name="Latreille P."/>
            <person name="Wendl M.C."/>
            <person name="Yang S.-P."/>
            <person name="Pohl C."/>
            <person name="Wallis J.W."/>
            <person name="Spieth J."/>
            <person name="Bieri T.A."/>
            <person name="Berkowicz N."/>
            <person name="Nelson J.O."/>
            <person name="Osborne J."/>
            <person name="Ding L."/>
            <person name="Meyer R."/>
            <person name="Sabo A."/>
            <person name="Shotland Y."/>
            <person name="Sinha P."/>
            <person name="Wohldmann P.E."/>
            <person name="Cook L.L."/>
            <person name="Hickenbotham M.T."/>
            <person name="Eldred J."/>
            <person name="Williams D."/>
            <person name="Jones T.A."/>
            <person name="She X."/>
            <person name="Ciccarelli F.D."/>
            <person name="Izaurralde E."/>
            <person name="Taylor J."/>
            <person name="Schmutz J."/>
            <person name="Myers R.M."/>
            <person name="Cox D.R."/>
            <person name="Huang X."/>
            <person name="McPherson J.D."/>
            <person name="Mardis E.R."/>
            <person name="Clifton S.W."/>
            <person name="Warren W.C."/>
            <person name="Chinwalla A.T."/>
            <person name="Eddy S.R."/>
            <person name="Marra M.A."/>
            <person name="Ovcharenko I."/>
            <person name="Furey T.S."/>
            <person name="Miller W."/>
            <person name="Eichler E.E."/>
            <person name="Bork P."/>
            <person name="Suyama M."/>
            <person name="Torrents D."/>
            <person name="Waterston R.H."/>
            <person name="Wilson R.K."/>
        </authorList>
    </citation>
    <scope>NUCLEOTIDE SEQUENCE [LARGE SCALE GENOMIC DNA]</scope>
</reference>
<reference key="5">
    <citation type="submission" date="2005-07" db="EMBL/GenBank/DDBJ databases">
        <authorList>
            <person name="Mural R.J."/>
            <person name="Istrail S."/>
            <person name="Sutton G.G."/>
            <person name="Florea L."/>
            <person name="Halpern A.L."/>
            <person name="Mobarry C.M."/>
            <person name="Lippert R."/>
            <person name="Walenz B."/>
            <person name="Shatkay H."/>
            <person name="Dew I."/>
            <person name="Miller J.R."/>
            <person name="Flanigan M.J."/>
            <person name="Edwards N.J."/>
            <person name="Bolanos R."/>
            <person name="Fasulo D."/>
            <person name="Halldorsson B.V."/>
            <person name="Hannenhalli S."/>
            <person name="Turner R."/>
            <person name="Yooseph S."/>
            <person name="Lu F."/>
            <person name="Nusskern D.R."/>
            <person name="Shue B.C."/>
            <person name="Zheng X.H."/>
            <person name="Zhong F."/>
            <person name="Delcher A.L."/>
            <person name="Huson D.H."/>
            <person name="Kravitz S.A."/>
            <person name="Mouchard L."/>
            <person name="Reinert K."/>
            <person name="Remington K.A."/>
            <person name="Clark A.G."/>
            <person name="Waterman M.S."/>
            <person name="Eichler E.E."/>
            <person name="Adams M.D."/>
            <person name="Hunkapiller M.W."/>
            <person name="Myers E.W."/>
            <person name="Venter J.C."/>
        </authorList>
    </citation>
    <scope>NUCLEOTIDE SEQUENCE [LARGE SCALE GENOMIC DNA]</scope>
</reference>
<reference key="6">
    <citation type="journal article" date="2004" name="Genome Res.">
        <title>The status, quality, and expansion of the NIH full-length cDNA project: the Mammalian Gene Collection (MGC).</title>
        <authorList>
            <consortium name="The MGC Project Team"/>
        </authorList>
    </citation>
    <scope>NUCLEOTIDE SEQUENCE [LARGE SCALE MRNA]</scope>
    <source>
        <tissue>B-cell</tissue>
    </source>
</reference>
<reference key="7">
    <citation type="journal article" date="2004" name="Biochem. Biophys. Res. Commun.">
        <title>TIFAB inhibits TIFA, TRAF-interacting protein with a forkhead-associated domain.</title>
        <authorList>
            <person name="Matsumura T."/>
            <person name="Semba K."/>
            <person name="Azuma S."/>
            <person name="Ikawa S."/>
            <person name="Gohda J."/>
            <person name="Akiyama T."/>
            <person name="Inoue J."/>
        </authorList>
    </citation>
    <scope>INTERACTION WITH TIFAB</scope>
</reference>
<reference key="8">
    <citation type="journal article" date="2004" name="Proc. Natl. Acad. Sci. U.S.A.">
        <title>TIFA activates IkappaB kinase (IKK) by promoting oligomerization and ubiquitination of TRAF6.</title>
        <authorList>
            <person name="Ea C.-K."/>
            <person name="Sun L."/>
            <person name="Inoue J."/>
            <person name="Chen Z.J."/>
        </authorList>
    </citation>
    <scope>FUNCTION</scope>
</reference>
<reference key="9">
    <citation type="journal article" date="2006" name="Biochem. Biophys. Res. Commun.">
        <title>A novel Zinc finger protein, ZCCHC11, interacts with TIFA and modulates TLR signaling.</title>
        <authorList>
            <person name="Minoda Y."/>
            <person name="Saeki K."/>
            <person name="Aki D."/>
            <person name="Takaki H."/>
            <person name="Sanada T."/>
            <person name="Koga K."/>
            <person name="Kobayashi T."/>
            <person name="Takaesu G."/>
            <person name="Yoshimura A."/>
        </authorList>
    </citation>
    <scope>INTERACTION WITH ZCCHC11</scope>
</reference>
<reference key="10">
    <citation type="journal article" date="2011" name="BMC Syst. Biol.">
        <title>Initial characterization of the human central proteome.</title>
        <authorList>
            <person name="Burkard T.R."/>
            <person name="Planyavsky M."/>
            <person name="Kaupe I."/>
            <person name="Breitwieser F.P."/>
            <person name="Buerckstuemmer T."/>
            <person name="Bennett K.L."/>
            <person name="Superti-Furga G."/>
            <person name="Colinge J."/>
        </authorList>
    </citation>
    <scope>IDENTIFICATION BY MASS SPECTROMETRY [LARGE SCALE ANALYSIS]</scope>
</reference>
<reference key="11">
    <citation type="journal article" date="2012" name="Mol. Cell. Biol.">
        <title>Intermolecular binding between TIFA-FHA and TIFA-pT mediates tumor necrosis factor alpha stimulation and NF-kappaB activation.</title>
        <authorList>
            <person name="Huang C.C."/>
            <person name="Weng J.H."/>
            <person name="Wei T.Y."/>
            <person name="Wu P.Y."/>
            <person name="Hsu P.H."/>
            <person name="Chen Y.H."/>
            <person name="Wang S.C."/>
            <person name="Qin D."/>
            <person name="Hung C.C."/>
            <person name="Chen S.T."/>
            <person name="Wang A.H."/>
            <person name="Shyy J.Y."/>
            <person name="Tsai M.D."/>
        </authorList>
    </citation>
    <scope>SUBCELLULAR LOCATION</scope>
    <scope>SUBUNIT</scope>
    <scope>DOMAIN</scope>
    <scope>PHOSPHORYLATION AT THR-9</scope>
    <scope>MUTAGENESIS OF THR-9; ARG-51; 88-LYS-ASN-89 AND GLU-178</scope>
</reference>
<reference key="12">
    <citation type="journal article" date="2015" name="Science">
        <title>INNATE IMMUNITY. Cytosolic detection of the bacterial metabolite HBP activates TIFA-dependent innate immunity.</title>
        <authorList>
            <person name="Gaudet R.G."/>
            <person name="Sintsova A."/>
            <person name="Buckwalter C.M."/>
            <person name="Leung N."/>
            <person name="Cochrane A."/>
            <person name="Li J."/>
            <person name="Cox A.D."/>
            <person name="Moffat J."/>
            <person name="Gray-Owen S.D."/>
        </authorList>
    </citation>
    <scope>FUNCTION</scope>
    <scope>SUBCELLULAR LOCATION</scope>
    <scope>SUBUNIT</scope>
    <scope>PHOSPHORYLATION AT THR-9</scope>
    <scope>MUTAGENESIS OF THR-9; GLY-50; SER-66 AND GLU-178</scope>
</reference>
<reference key="13">
    <citation type="journal article" date="2017" name="Cell Rep.">
        <title>ALPK1- and TIFA-dependent innate immune response triggered by the Helicobacter pylori type IV secretion system.</title>
        <authorList>
            <person name="Zimmermann S."/>
            <person name="Pfannkuch L."/>
            <person name="Al-Zeer M.A."/>
            <person name="Bartfeld S."/>
            <person name="Koch M."/>
            <person name="Liu J."/>
            <person name="Rechner C."/>
            <person name="Soerensen M."/>
            <person name="Sokolova O."/>
            <person name="Zamyatina A."/>
            <person name="Kosma P."/>
            <person name="Maeurer A.P."/>
            <person name="Glowinski F."/>
            <person name="Pleissner K.P."/>
            <person name="Schmid M."/>
            <person name="Brinkmann V."/>
            <person name="Karlas A."/>
            <person name="Naumann M."/>
            <person name="Rother M."/>
            <person name="Machuy N."/>
            <person name="Meyer T.F."/>
        </authorList>
    </citation>
    <scope>FUNCTION</scope>
    <scope>MUTAGENESIS OF THR-9</scope>
</reference>
<reference key="14">
    <citation type="journal article" date="2017" name="PLoS Pathog.">
        <title>ALPK1 controls TIFA/TRAF6-dependent innate immunity against heptose-1,7-bisphosphate of gram-negative bacteria.</title>
        <authorList>
            <person name="Milivojevic M."/>
            <person name="Dangeard A.S."/>
            <person name="Kasper C.A."/>
            <person name="Tschon T."/>
            <person name="Emmenlauer M."/>
            <person name="Pique C."/>
            <person name="Schnupf P."/>
            <person name="Guignot J."/>
            <person name="Arrieumerlou C."/>
        </authorList>
    </citation>
    <scope>FUNCTION</scope>
    <scope>MUTAGENESIS OF THR-9; ARG-51; 88-LYS-ASN-89 AND GLU-178</scope>
</reference>
<reference key="15">
    <citation type="journal article" date="2018" name="Nature">
        <title>Alpha-kinase 1 is a cytosolic innate immune receptor for bacterial ADP-heptose.</title>
        <authorList>
            <person name="Zhou P."/>
            <person name="She Y."/>
            <person name="Dong N."/>
            <person name="Li P."/>
            <person name="He H."/>
            <person name="Borio A."/>
            <person name="Wu Q."/>
            <person name="Lu S."/>
            <person name="Ding X."/>
            <person name="Cao Y."/>
            <person name="Xu Y."/>
            <person name="Gao W."/>
            <person name="Dong M."/>
            <person name="Ding J."/>
            <person name="Wang D.C."/>
            <person name="Zamyatina A."/>
            <person name="Shao F."/>
        </authorList>
    </citation>
    <scope>FUNCTION</scope>
    <scope>PHOSPHORYLATION AT THR-9</scope>
    <scope>MUTAGENESIS OF THR-9</scope>
</reference>
<reference evidence="19 20" key="16">
    <citation type="journal article" date="2015" name="Biochemistry">
        <title>Uncovering the mechanism of forkhead-associated domain-mediated TIFA oligomerization that plays a central role in immune responses.</title>
        <authorList>
            <person name="Weng J.H."/>
            <person name="Hsieh Y.C."/>
            <person name="Huang C.C."/>
            <person name="Wei T.Y."/>
            <person name="Lim L.H."/>
            <person name="Chen Y.H."/>
            <person name="Ho M.R."/>
            <person name="Wang I."/>
            <person name="Huang K.F."/>
            <person name="Chen C.J."/>
            <person name="Tsai M.D."/>
        </authorList>
    </citation>
    <scope>X-RAY CRYSTALLOGRAPHY (2.70 ANGSTROMS) OF 10-149</scope>
    <scope>SUBUNIT</scope>
    <scope>PHOSPHORYLATION AT THR-9</scope>
</reference>
<sequence>MTSFEDADTEETVTCLQMTVYHPGQLQCGIFQSISFNREKLPSSEVVKFGRNSNICHYTFQDKQVSRVQFSLQLFKKFNSSVLSFEIKNMSKKTNLIVDSRELGYLNKMDLPYRCMVRFGEYQFLMEKEDGESLEFFETQFILSPRSLLQENNWPPHRPIPEYGTYSLCSSQSSSPTEMDENES</sequence>
<keyword id="KW-0002">3D-structure</keyword>
<keyword id="KW-0963">Cytoplasm</keyword>
<keyword id="KW-0391">Immunity</keyword>
<keyword id="KW-0399">Innate immunity</keyword>
<keyword id="KW-0597">Phosphoprotein</keyword>
<keyword id="KW-1267">Proteomics identification</keyword>
<keyword id="KW-1185">Reference proteome</keyword>
<protein>
    <recommendedName>
        <fullName evidence="14">TRAF-interacting protein with FHA domain-containing protein A</fullName>
    </recommendedName>
    <alternativeName>
        <fullName>Putative MAPK-activating protein PM14</fullName>
    </alternativeName>
    <alternativeName>
        <fullName evidence="15">Putative NF-kappa-B-activating protein 20</fullName>
    </alternativeName>
    <alternativeName>
        <fullName evidence="1">TRAF2-binding protein</fullName>
    </alternativeName>
</protein>
<comment type="function">
    <text evidence="4 6 9 11 12 13">Adapter molecule that plays a key role in the activation of pro-inflammatory NF-kappa-B signaling following detection of bacterial pathogen-associated molecular pattern metabolites (PAMPs) (PubMed:12566447, PubMed:15492226, PubMed:26068852, PubMed:28222186, PubMed:28877472, PubMed:30111836). Promotes activation of an innate immune response by inducing the oligomerization and polyubiquitination of TRAF6, which leads to the activation of TAK1 and IKK through a proteasome-independent mechanism (PubMed:15492226, PubMed:26068852). TIFA-dependent innate immune response is triggered by ADP-D-glycero-beta-D-manno-heptose (ADP-Heptose), a potent PAMP present in all Gram-negative and some Gram-positive bacteria: ADP-Heptose is recognized by ALPK1, which phosphorylates TIFA at Thr-9, leading to TIFA homooligomerization and subsequent activation of pro-inflammatory NF-kappa-B signaling (PubMed:30111836).</text>
</comment>
<comment type="subunit">
    <text evidence="4 5 7 8 9 10">Homooligomer; homooligomerizes following phosphorylation at Thr-9 (PubMed:12566447, PubMed:22566686, PubMed:26068852, PubMed:26389808). Interacts with IRAK1, TRAF2 and TRAF6 (PubMed:12566447). Interacts with TIFAB; binding to TIFAB inhibits TRAF6 activation, possibly by inducing a conformational change in TIFA (PubMed:15047173). Interacts with ZCCHC11; binding to ZCCHC11 suppresses the TRAF6-dependent activation of NF-kappa-B (PubMed:16643855).</text>
</comment>
<comment type="interaction">
    <interactant intactId="EBI-740711">
        <id>Q96CG3</id>
    </interactant>
    <interactant intactId="EBI-541426">
        <id>Q9BXS5</id>
        <label>AP1M1</label>
    </interactant>
    <organismsDiffer>false</organismsDiffer>
    <experiments>7</experiments>
</comment>
<comment type="interaction">
    <interactant intactId="EBI-740711">
        <id>Q96CG3</id>
    </interactant>
    <interactant intactId="EBI-745468">
        <id>Q8N4T4</id>
        <label>ARHGEF39</label>
    </interactant>
    <organismsDiffer>false</organismsDiffer>
    <experiments>4</experiments>
</comment>
<comment type="interaction">
    <interactant intactId="EBI-740711">
        <id>Q96CG3</id>
    </interactant>
    <interactant intactId="EBI-740850">
        <id>O14641</id>
        <label>DVL2</label>
    </interactant>
    <organismsDiffer>false</organismsDiffer>
    <experiments>3</experiments>
</comment>
<comment type="interaction">
    <interactant intactId="EBI-740711">
        <id>Q96CG3</id>
    </interactant>
    <interactant intactId="EBI-719315">
        <id>O60443</id>
        <label>GSDME</label>
    </interactant>
    <organismsDiffer>false</organismsDiffer>
    <experiments>3</experiments>
</comment>
<comment type="interaction">
    <interactant intactId="EBI-740711">
        <id>Q96CG3</id>
    </interactant>
    <interactant intactId="EBI-2556193">
        <id>Q63ZY3</id>
        <label>KANK2</label>
    </interactant>
    <organismsDiffer>false</organismsDiffer>
    <experiments>3</experiments>
</comment>
<comment type="interaction">
    <interactant intactId="EBI-740711">
        <id>Q96CG3</id>
    </interactant>
    <interactant intactId="EBI-741158">
        <id>Q96HA8</id>
        <label>NTAQ1</label>
    </interactant>
    <organismsDiffer>false</organismsDiffer>
    <experiments>3</experiments>
</comment>
<comment type="interaction">
    <interactant intactId="EBI-740711">
        <id>Q96CG3</id>
    </interactant>
    <interactant intactId="EBI-398874">
        <id>Q9UBU9</id>
        <label>NXF1</label>
    </interactant>
    <organismsDiffer>false</organismsDiffer>
    <experiments>6</experiments>
</comment>
<comment type="interaction">
    <interactant intactId="EBI-740711">
        <id>Q96CG3</id>
    </interactant>
    <interactant intactId="EBI-1383852">
        <id>P54646</id>
        <label>PRKAA2</label>
    </interactant>
    <organismsDiffer>false</organismsDiffer>
    <experiments>3</experiments>
</comment>
<comment type="interaction">
    <interactant intactId="EBI-740711">
        <id>Q96CG3</id>
    </interactant>
    <interactant intactId="EBI-12092053">
        <id>P57055</id>
        <label>RIPPLY3</label>
    </interactant>
    <organismsDiffer>false</organismsDiffer>
    <experiments>4</experiments>
</comment>
<comment type="interaction">
    <interactant intactId="EBI-740711">
        <id>Q96CG3</id>
    </interactant>
    <interactant intactId="EBI-358122">
        <id>P32969</id>
        <label>RPL9P9</label>
    </interactant>
    <organismsDiffer>false</organismsDiffer>
    <experiments>6</experiments>
</comment>
<comment type="interaction">
    <interactant intactId="EBI-740711">
        <id>Q96CG3</id>
    </interactant>
    <interactant intactId="EBI-727004">
        <id>O00560</id>
        <label>SDCBP</label>
    </interactant>
    <organismsDiffer>false</organismsDiffer>
    <experiments>8</experiments>
</comment>
<comment type="interaction">
    <interactant intactId="EBI-740711">
        <id>Q96CG3</id>
    </interactant>
    <interactant intactId="EBI-742426">
        <id>Q9H190</id>
        <label>SDCBP2</label>
    </interactant>
    <organismsDiffer>false</organismsDiffer>
    <experiments>6</experiments>
</comment>
<comment type="interaction">
    <interactant intactId="EBI-740711">
        <id>Q96CG3</id>
    </interactant>
    <interactant intactId="EBI-26453465">
        <id>Q6ZNK6</id>
        <label>TIFAB</label>
    </interactant>
    <organismsDiffer>false</organismsDiffer>
    <experiments>3</experiments>
</comment>
<comment type="interaction">
    <interactant intactId="EBI-740711">
        <id>Q96CG3</id>
    </interactant>
    <interactant intactId="EBI-1049336">
        <id>O95379</id>
        <label>TNFAIP8</label>
    </interactant>
    <organismsDiffer>false</organismsDiffer>
    <experiments>3</experiments>
</comment>
<comment type="interaction">
    <interactant intactId="EBI-740711">
        <id>Q96CG3</id>
    </interactant>
    <interactant intactId="EBI-355744">
        <id>Q12933</id>
        <label>TRAF2</label>
    </interactant>
    <organismsDiffer>false</organismsDiffer>
    <experiments>12</experiments>
</comment>
<comment type="interaction">
    <interactant intactId="EBI-740711">
        <id>Q96CG3</id>
    </interactant>
    <interactant intactId="EBI-359276">
        <id>Q9Y4K3</id>
        <label>TRAF6</label>
    </interactant>
    <organismsDiffer>false</organismsDiffer>
    <experiments>6</experiments>
</comment>
<comment type="interaction">
    <interactant intactId="EBI-740711">
        <id>Q96CG3</id>
    </interactant>
    <interactant intactId="EBI-1606425">
        <id>Q5TAX3-1</id>
        <label>TUT4</label>
    </interactant>
    <organismsDiffer>false</organismsDiffer>
    <experiments>2</experiments>
</comment>
<comment type="interaction">
    <interactant intactId="EBI-740711">
        <id>Q96CG3</id>
    </interactant>
    <interactant intactId="EBI-2932492">
        <id>Q99757</id>
        <label>TXN2</label>
    </interactant>
    <organismsDiffer>false</organismsDiffer>
    <experiments>3</experiments>
</comment>
<comment type="interaction">
    <interactant intactId="EBI-740711">
        <id>Q96CG3</id>
    </interactant>
    <interactant intactId="EBI-448028">
        <id>P70196</id>
        <label>Traf6</label>
    </interactant>
    <organismsDiffer>true</organismsDiffer>
    <experiments>4</experiments>
</comment>
<comment type="subcellular location">
    <subcellularLocation>
        <location evidence="8 17">Cytoplasm</location>
    </subcellularLocation>
    <text evidence="9">Colocalizes with lysosomal marker LAMP2 following homooligomerization and subsequent activation.</text>
</comment>
<comment type="domain">
    <text evidence="8 10">The FHA domain recognizes and binds phosphorylated Thr-9, promoting homooligomerization and subsequent activation of NF-kappa-B.</text>
</comment>
<comment type="PTM">
    <text evidence="8 10 13">Phosphorylated at Thr-9 following detection of ADP-D-glycero-beta-D-manno-heptose (ADP-Heptose) by ALPK1 (PubMed:30111836). Phosphorylation at Thr-9 by ALPK1 leads to the formation of an intermolecular binding between the FHA domain and phosphorylated Thr-9, promoting TIFA oligomerization and TIFA-mediated NF-kappa-B activation (PubMed:22566686, PubMed:26389808, PubMed:30111836).</text>
</comment>
<comment type="similarity">
    <text evidence="16">Belongs to the TIFA family.</text>
</comment>
<comment type="caution">
    <text evidence="9 11 12 13">D-glycero-beta-D-manno-heptose 1,7-bisphosphate (HBP) was initially thought to constitute the bacterial pathogen-associated molecular pattern metabolite (PAMP) triggering the ALPK1-TIFA innate immunune response (PubMed:26068852, PubMed:28222186, PubMed:28877472). It was however shown that ADP-D-glycero-beta-D-manno-heptose (ADP-Heptose) constitutes the main PAMP that activates the kinase activity of ALPK1, promoting phosphorylation of TIFA (PubMed:30111836).</text>
</comment>
<evidence type="ECO:0000250" key="1">
    <source>
        <dbReference type="UniProtKB" id="Q793I8"/>
    </source>
</evidence>
<evidence type="ECO:0000255" key="2">
    <source>
        <dbReference type="PROSITE-ProRule" id="PRU00086"/>
    </source>
</evidence>
<evidence type="ECO:0000256" key="3">
    <source>
        <dbReference type="SAM" id="MobiDB-lite"/>
    </source>
</evidence>
<evidence type="ECO:0000269" key="4">
    <source>
    </source>
</evidence>
<evidence type="ECO:0000269" key="5">
    <source>
    </source>
</evidence>
<evidence type="ECO:0000269" key="6">
    <source>
    </source>
</evidence>
<evidence type="ECO:0000269" key="7">
    <source>
    </source>
</evidence>
<evidence type="ECO:0000269" key="8">
    <source>
    </source>
</evidence>
<evidence type="ECO:0000269" key="9">
    <source>
    </source>
</evidence>
<evidence type="ECO:0000269" key="10">
    <source>
    </source>
</evidence>
<evidence type="ECO:0000269" key="11">
    <source>
    </source>
</evidence>
<evidence type="ECO:0000269" key="12">
    <source>
    </source>
</evidence>
<evidence type="ECO:0000269" key="13">
    <source>
    </source>
</evidence>
<evidence type="ECO:0000303" key="14">
    <source>
    </source>
</evidence>
<evidence type="ECO:0000303" key="15">
    <source>
    </source>
</evidence>
<evidence type="ECO:0000305" key="16"/>
<evidence type="ECO:0000305" key="17">
    <source>
    </source>
</evidence>
<evidence type="ECO:0000312" key="18">
    <source>
        <dbReference type="HGNC" id="HGNC:19075"/>
    </source>
</evidence>
<evidence type="ECO:0007744" key="19">
    <source>
        <dbReference type="PDB" id="4YM4"/>
    </source>
</evidence>
<evidence type="ECO:0007744" key="20">
    <source>
        <dbReference type="PDB" id="4ZGI"/>
    </source>
</evidence>
<evidence type="ECO:0007829" key="21">
    <source>
        <dbReference type="PDB" id="4YM4"/>
    </source>
</evidence>
<evidence type="ECO:0007829" key="22">
    <source>
        <dbReference type="PDB" id="4ZGI"/>
    </source>
</evidence>
<evidence type="ECO:0007829" key="23">
    <source>
        <dbReference type="PDB" id="6A33"/>
    </source>
</evidence>
<dbReference type="EMBL" id="AB062110">
    <property type="protein sequence ID" value="BAB86902.1"/>
    <property type="molecule type" value="mRNA"/>
</dbReference>
<dbReference type="EMBL" id="AB097011">
    <property type="protein sequence ID" value="BAC77364.1"/>
    <property type="molecule type" value="mRNA"/>
</dbReference>
<dbReference type="EMBL" id="AB097038">
    <property type="protein sequence ID" value="BAC77391.1"/>
    <property type="molecule type" value="mRNA"/>
</dbReference>
<dbReference type="EMBL" id="AK292900">
    <property type="protein sequence ID" value="BAF85589.1"/>
    <property type="molecule type" value="mRNA"/>
</dbReference>
<dbReference type="EMBL" id="AC109347">
    <property type="protein sequence ID" value="AAY40963.1"/>
    <property type="molecule type" value="Genomic_DNA"/>
</dbReference>
<dbReference type="EMBL" id="CH471057">
    <property type="protein sequence ID" value="EAX06273.1"/>
    <property type="molecule type" value="Genomic_DNA"/>
</dbReference>
<dbReference type="EMBL" id="BC014259">
    <property type="protein sequence ID" value="AAH14259.1"/>
    <property type="molecule type" value="mRNA"/>
</dbReference>
<dbReference type="CCDS" id="CCDS34051.1"/>
<dbReference type="RefSeq" id="NP_443096.1">
    <property type="nucleotide sequence ID" value="NM_052864.3"/>
</dbReference>
<dbReference type="RefSeq" id="XP_054207225.1">
    <property type="nucleotide sequence ID" value="XM_054351250.1"/>
</dbReference>
<dbReference type="PDB" id="4YM4">
    <property type="method" value="X-ray"/>
    <property type="resolution" value="3.12 A"/>
    <property type="chains" value="A=10-150, B=1-12"/>
</dbReference>
<dbReference type="PDB" id="4ZGI">
    <property type="method" value="X-ray"/>
    <property type="resolution" value="2.70 A"/>
    <property type="chains" value="A=10-149"/>
</dbReference>
<dbReference type="PDB" id="5ZUJ">
    <property type="method" value="X-ray"/>
    <property type="resolution" value="2.60 A"/>
    <property type="chains" value="I=170-184"/>
</dbReference>
<dbReference type="PDB" id="6A33">
    <property type="method" value="X-ray"/>
    <property type="resolution" value="2.10 A"/>
    <property type="chains" value="I=170-184"/>
</dbReference>
<dbReference type="PDBsum" id="4YM4"/>
<dbReference type="PDBsum" id="4ZGI"/>
<dbReference type="PDBsum" id="5ZUJ"/>
<dbReference type="PDBsum" id="6A33"/>
<dbReference type="SMR" id="Q96CG3"/>
<dbReference type="BioGRID" id="124962">
    <property type="interactions" value="42"/>
</dbReference>
<dbReference type="ComplexPortal" id="CPX-9621">
    <property type="entry name" value="TRAF6-TIFA E3 ubiquitin ligase complex"/>
</dbReference>
<dbReference type="ComplexPortal" id="CPX-9661">
    <property type="entry name" value="TIFA-TIFAB signalling regulator complex"/>
</dbReference>
<dbReference type="ComplexPortal" id="CPX-9741">
    <property type="entry name" value="TRAF2-TIFA E3 ubiquitin ligase complex"/>
</dbReference>
<dbReference type="DIP" id="DIP-40185N"/>
<dbReference type="FunCoup" id="Q96CG3">
    <property type="interactions" value="1053"/>
</dbReference>
<dbReference type="IntAct" id="Q96CG3">
    <property type="interactions" value="28"/>
</dbReference>
<dbReference type="MINT" id="Q96CG3"/>
<dbReference type="STRING" id="9606.ENSP00000354911"/>
<dbReference type="GlyGen" id="Q96CG3">
    <property type="glycosylation" value="3 sites"/>
</dbReference>
<dbReference type="iPTMnet" id="Q96CG3"/>
<dbReference type="PhosphoSitePlus" id="Q96CG3"/>
<dbReference type="BioMuta" id="TIFA"/>
<dbReference type="DMDM" id="74751795"/>
<dbReference type="jPOST" id="Q96CG3"/>
<dbReference type="MassIVE" id="Q96CG3"/>
<dbReference type="PaxDb" id="9606-ENSP00000354911"/>
<dbReference type="PeptideAtlas" id="Q96CG3"/>
<dbReference type="ProteomicsDB" id="76185"/>
<dbReference type="Pumba" id="Q96CG3"/>
<dbReference type="Antibodypedia" id="45213">
    <property type="antibodies" value="107 antibodies from 21 providers"/>
</dbReference>
<dbReference type="DNASU" id="92610"/>
<dbReference type="Ensembl" id="ENST00000361717.4">
    <property type="protein sequence ID" value="ENSP00000354911.2"/>
    <property type="gene ID" value="ENSG00000145365.12"/>
</dbReference>
<dbReference type="Ensembl" id="ENST00000500655.2">
    <property type="protein sequence ID" value="ENSP00000424231.1"/>
    <property type="gene ID" value="ENSG00000145365.12"/>
</dbReference>
<dbReference type="Ensembl" id="ENST00000610220.2">
    <property type="protein sequence ID" value="ENSP00000516322.1"/>
    <property type="gene ID" value="ENSG00000145365.12"/>
</dbReference>
<dbReference type="GeneID" id="92610"/>
<dbReference type="KEGG" id="hsa:92610"/>
<dbReference type="MANE-Select" id="ENST00000361717.4">
    <property type="protein sequence ID" value="ENSP00000354911.2"/>
    <property type="RefSeq nucleotide sequence ID" value="NM_052864.3"/>
    <property type="RefSeq protein sequence ID" value="NP_443096.1"/>
</dbReference>
<dbReference type="UCSC" id="uc003ial.4">
    <property type="organism name" value="human"/>
</dbReference>
<dbReference type="AGR" id="HGNC:19075"/>
<dbReference type="CTD" id="92610"/>
<dbReference type="DisGeNET" id="92610"/>
<dbReference type="GeneCards" id="TIFA"/>
<dbReference type="HGNC" id="HGNC:19075">
    <property type="gene designation" value="TIFA"/>
</dbReference>
<dbReference type="HPA" id="ENSG00000145365">
    <property type="expression patterns" value="Low tissue specificity"/>
</dbReference>
<dbReference type="MIM" id="609028">
    <property type="type" value="gene"/>
</dbReference>
<dbReference type="neXtProt" id="NX_Q96CG3"/>
<dbReference type="OpenTargets" id="ENSG00000145365"/>
<dbReference type="PharmGKB" id="PA162405777"/>
<dbReference type="VEuPathDB" id="HostDB:ENSG00000145365"/>
<dbReference type="eggNOG" id="ENOG502S0RF">
    <property type="taxonomic scope" value="Eukaryota"/>
</dbReference>
<dbReference type="GeneTree" id="ENSGT00940000154589"/>
<dbReference type="HOGENOM" id="CLU_125520_0_0_1"/>
<dbReference type="InParanoid" id="Q96CG3"/>
<dbReference type="OMA" id="TITCLQM"/>
<dbReference type="OrthoDB" id="9893545at2759"/>
<dbReference type="PAN-GO" id="Q96CG3">
    <property type="GO annotations" value="5 GO annotations based on evolutionary models"/>
</dbReference>
<dbReference type="PhylomeDB" id="Q96CG3"/>
<dbReference type="TreeFam" id="TF333218"/>
<dbReference type="PathwayCommons" id="Q96CG3"/>
<dbReference type="Reactome" id="R-HSA-445989">
    <property type="pathway name" value="TAK1-dependent IKK and NF-kappa-B activation"/>
</dbReference>
<dbReference type="Reactome" id="R-HSA-9645460">
    <property type="pathway name" value="Alpha-protein kinase 1 signaling pathway"/>
</dbReference>
<dbReference type="SignaLink" id="Q96CG3"/>
<dbReference type="SIGNOR" id="Q96CG3"/>
<dbReference type="BioGRID-ORCS" id="92610">
    <property type="hits" value="10 hits in 1149 CRISPR screens"/>
</dbReference>
<dbReference type="EvolutionaryTrace" id="Q96CG3"/>
<dbReference type="GenomeRNAi" id="92610"/>
<dbReference type="Pharos" id="Q96CG3">
    <property type="development level" value="Tbio"/>
</dbReference>
<dbReference type="PRO" id="PR:Q96CG3"/>
<dbReference type="Proteomes" id="UP000005640">
    <property type="component" value="Chromosome 4"/>
</dbReference>
<dbReference type="RNAct" id="Q96CG3">
    <property type="molecule type" value="protein"/>
</dbReference>
<dbReference type="Bgee" id="ENSG00000145365">
    <property type="expression patterns" value="Expressed in secondary oocyte and 167 other cell types or tissues"/>
</dbReference>
<dbReference type="GO" id="GO:0005737">
    <property type="term" value="C:cytoplasm"/>
    <property type="evidence" value="ECO:0000314"/>
    <property type="project" value="UniProtKB"/>
</dbReference>
<dbReference type="GO" id="GO:0005829">
    <property type="term" value="C:cytosol"/>
    <property type="evidence" value="ECO:0000304"/>
    <property type="project" value="Reactome"/>
</dbReference>
<dbReference type="GO" id="GO:0002753">
    <property type="term" value="P:cytoplasmic pattern recognition receptor signaling pathway"/>
    <property type="evidence" value="ECO:0000314"/>
    <property type="project" value="UniProtKB"/>
</dbReference>
<dbReference type="GO" id="GO:0045087">
    <property type="term" value="P:innate immune response"/>
    <property type="evidence" value="ECO:0000314"/>
    <property type="project" value="UniProtKB"/>
</dbReference>
<dbReference type="GO" id="GO:0043123">
    <property type="term" value="P:positive regulation of canonical NF-kappaB signal transduction"/>
    <property type="evidence" value="ECO:0000314"/>
    <property type="project" value="UniProtKB"/>
</dbReference>
<dbReference type="GO" id="GO:0051260">
    <property type="term" value="P:protein homooligomerization"/>
    <property type="evidence" value="ECO:0000314"/>
    <property type="project" value="UniProtKB"/>
</dbReference>
<dbReference type="GO" id="GO:0033209">
    <property type="term" value="P:tumor necrosis factor-mediated signaling pathway"/>
    <property type="evidence" value="ECO:0007669"/>
    <property type="project" value="Ensembl"/>
</dbReference>
<dbReference type="CDD" id="cd22714">
    <property type="entry name" value="FHA_TIFA"/>
    <property type="match status" value="1"/>
</dbReference>
<dbReference type="InterPro" id="IPR000253">
    <property type="entry name" value="FHA_dom"/>
</dbReference>
<dbReference type="InterPro" id="IPR008984">
    <property type="entry name" value="SMAD_FHA_dom_sf"/>
</dbReference>
<dbReference type="InterPro" id="IPR033621">
    <property type="entry name" value="TIFA"/>
</dbReference>
<dbReference type="PANTHER" id="PTHR31266:SF2">
    <property type="entry name" value="TRAF-INTERACTING PROTEIN WITH FHA DOMAIN-CONTAINING PROTEIN A"/>
    <property type="match status" value="1"/>
</dbReference>
<dbReference type="PANTHER" id="PTHR31266">
    <property type="entry name" value="TRAF-INTERACTING PROTEIN WITH FHA DOMAIN-CONTAINING PROTEIN A FAMILY MEMBER"/>
    <property type="match status" value="1"/>
</dbReference>
<dbReference type="Pfam" id="PF00498">
    <property type="entry name" value="FHA"/>
    <property type="match status" value="1"/>
</dbReference>
<dbReference type="SUPFAM" id="SSF49879">
    <property type="entry name" value="SMAD/FHA domain"/>
    <property type="match status" value="1"/>
</dbReference>
<dbReference type="PROSITE" id="PS50006">
    <property type="entry name" value="FHA_DOMAIN"/>
    <property type="match status" value="1"/>
</dbReference>
<feature type="chain" id="PRO_0000320689" description="TRAF-interacting protein with FHA domain-containing protein A">
    <location>
        <begin position="1"/>
        <end position="184"/>
    </location>
</feature>
<feature type="domain" description="FHA" evidence="2">
    <location>
        <begin position="47"/>
        <end position="103"/>
    </location>
</feature>
<feature type="region of interest" description="Disordered" evidence="3">
    <location>
        <begin position="165"/>
        <end position="184"/>
    </location>
</feature>
<feature type="compositionally biased region" description="Polar residues" evidence="3">
    <location>
        <begin position="167"/>
        <end position="177"/>
    </location>
</feature>
<feature type="modified residue" description="Phosphothreonine; by ALPK1" evidence="8 9 10 13">
    <location>
        <position position="9"/>
    </location>
</feature>
<feature type="sequence variant" id="VAR_051422" description="In dbSNP:rs6834237.">
    <original>T</original>
    <variation>M</variation>
    <location>
        <position position="19"/>
    </location>
</feature>
<feature type="mutagenesis site" description="Abolishes phosphorylation by ALPK1 and subsequent TIFA-mediated NF-kappa-B activation." evidence="8 9 11 12 13">
    <original>T</original>
    <variation>A</variation>
    <location>
        <position position="9"/>
    </location>
</feature>
<feature type="mutagenesis site" description="Loss of homooligomerization and activation of NF-kappa-B and JNK pathways; when associated with A-66." evidence="4 9">
    <original>G</original>
    <variation>E</variation>
    <location>
        <position position="50"/>
    </location>
</feature>
<feature type="mutagenesis site" description="In RKN: Loss of homooligomerization and activation of NF-kappa-B and JNK pathways; when associated with 88-A-A-89." evidence="8 11">
    <original>R</original>
    <variation>A</variation>
    <location>
        <position position="51"/>
    </location>
</feature>
<feature type="mutagenesis site" description="Loss of homooligomerization and activation of NF-kappa-B and JNK pathways; when associated with E-50." evidence="4 9">
    <original>S</original>
    <variation>A</variation>
    <location>
        <position position="66"/>
    </location>
</feature>
<feature type="mutagenesis site" description="In RKN: Loss of homooligomerization and activation of NF-kappa-B and JNK pathways; when associated with A-51." evidence="8 11">
    <original>KN</original>
    <variation>AA</variation>
    <location>
        <begin position="88"/>
        <end position="89"/>
    </location>
</feature>
<feature type="mutagenesis site" description="Loss of binding to TRAF6 and activation of NF-kappa-B and JNK pathways." evidence="4 8 9 11">
    <original>E</original>
    <variation>A</variation>
    <location>
        <position position="178"/>
    </location>
</feature>
<feature type="turn" evidence="21">
    <location>
        <begin position="4"/>
        <end position="6"/>
    </location>
</feature>
<feature type="strand" evidence="22">
    <location>
        <begin position="14"/>
        <end position="21"/>
    </location>
</feature>
<feature type="helix" evidence="22">
    <location>
        <begin position="23"/>
        <end position="26"/>
    </location>
</feature>
<feature type="turn" evidence="22">
    <location>
        <begin position="30"/>
        <end position="33"/>
    </location>
</feature>
<feature type="strand" evidence="22">
    <location>
        <begin position="37"/>
        <end position="42"/>
    </location>
</feature>
<feature type="strand" evidence="22">
    <location>
        <begin position="47"/>
        <end position="51"/>
    </location>
</feature>
<feature type="turn" evidence="22">
    <location>
        <begin position="53"/>
        <end position="55"/>
    </location>
</feature>
<feature type="strand" evidence="22">
    <location>
        <begin position="57"/>
        <end position="59"/>
    </location>
</feature>
<feature type="strand" evidence="22">
    <location>
        <begin position="70"/>
        <end position="76"/>
    </location>
</feature>
<feature type="strand" evidence="22">
    <location>
        <begin position="81"/>
        <end position="89"/>
    </location>
</feature>
<feature type="strand" evidence="22">
    <location>
        <begin position="92"/>
        <end position="94"/>
    </location>
</feature>
<feature type="strand" evidence="22">
    <location>
        <begin position="96"/>
        <end position="98"/>
    </location>
</feature>
<feature type="strand" evidence="22">
    <location>
        <begin position="101"/>
        <end position="103"/>
    </location>
</feature>
<feature type="strand" evidence="22">
    <location>
        <begin position="108"/>
        <end position="110"/>
    </location>
</feature>
<feature type="strand" evidence="22">
    <location>
        <begin position="113"/>
        <end position="119"/>
    </location>
</feature>
<feature type="strand" evidence="22">
    <location>
        <begin position="122"/>
        <end position="129"/>
    </location>
</feature>
<feature type="strand" evidence="22">
    <location>
        <begin position="134"/>
        <end position="143"/>
    </location>
</feature>
<feature type="strand" evidence="23">
    <location>
        <begin position="177"/>
        <end position="180"/>
    </location>
</feature>
<feature type="turn" evidence="23">
    <location>
        <begin position="181"/>
        <end position="183"/>
    </location>
</feature>
<gene>
    <name evidence="14 18" type="primary">TIFA</name>
    <name evidence="1" type="synonym">T2BP</name>
</gene>